<protein>
    <recommendedName>
        <fullName evidence="1">1-(5-phosphoribosyl)-5-[(5-phosphoribosylamino)methylideneamino] imidazole-4-carboxamide isomerase</fullName>
        <ecNumber evidence="1">5.3.1.16</ecNumber>
    </recommendedName>
    <alternativeName>
        <fullName evidence="1">Phosphoribosylformimino-5-aminoimidazole carboxamide ribotide isomerase</fullName>
    </alternativeName>
</protein>
<evidence type="ECO:0000255" key="1">
    <source>
        <dbReference type="HAMAP-Rule" id="MF_01014"/>
    </source>
</evidence>
<feature type="chain" id="PRO_0000290513" description="1-(5-phosphoribosyl)-5-[(5-phosphoribosylamino)methylideneamino] imidazole-4-carboxamide isomerase">
    <location>
        <begin position="1"/>
        <end position="245"/>
    </location>
</feature>
<feature type="active site" description="Proton acceptor" evidence="1">
    <location>
        <position position="8"/>
    </location>
</feature>
<feature type="active site" description="Proton donor" evidence="1">
    <location>
        <position position="130"/>
    </location>
</feature>
<reference key="1">
    <citation type="journal article" date="2006" name="Genome Biol.">
        <title>Genomic analysis reveals that Pseudomonas aeruginosa virulence is combinatorial.</title>
        <authorList>
            <person name="Lee D.G."/>
            <person name="Urbach J.M."/>
            <person name="Wu G."/>
            <person name="Liberati N.T."/>
            <person name="Feinbaum R.L."/>
            <person name="Miyata S."/>
            <person name="Diggins L.T."/>
            <person name="He J."/>
            <person name="Saucier M."/>
            <person name="Deziel E."/>
            <person name="Friedman L."/>
            <person name="Li L."/>
            <person name="Grills G."/>
            <person name="Montgomery K."/>
            <person name="Kucherlapati R."/>
            <person name="Rahme L.G."/>
            <person name="Ausubel F.M."/>
        </authorList>
    </citation>
    <scope>NUCLEOTIDE SEQUENCE [LARGE SCALE GENOMIC DNA]</scope>
    <source>
        <strain>UCBPP-PA14</strain>
    </source>
</reference>
<dbReference type="EC" id="5.3.1.16" evidence="1"/>
<dbReference type="EMBL" id="CP000438">
    <property type="protein sequence ID" value="ABJ14524.1"/>
    <property type="molecule type" value="Genomic_DNA"/>
</dbReference>
<dbReference type="RefSeq" id="WP_003106336.1">
    <property type="nucleotide sequence ID" value="NZ_CP034244.1"/>
</dbReference>
<dbReference type="SMR" id="Q02EM5"/>
<dbReference type="KEGG" id="pau:PA14_67890"/>
<dbReference type="PseudoCAP" id="PA14_67890"/>
<dbReference type="HOGENOM" id="CLU_048577_1_1_6"/>
<dbReference type="BioCyc" id="PAER208963:G1G74-5724-MONOMER"/>
<dbReference type="UniPathway" id="UPA00031">
    <property type="reaction ID" value="UER00009"/>
</dbReference>
<dbReference type="Proteomes" id="UP000000653">
    <property type="component" value="Chromosome"/>
</dbReference>
<dbReference type="GO" id="GO:0005737">
    <property type="term" value="C:cytoplasm"/>
    <property type="evidence" value="ECO:0007669"/>
    <property type="project" value="UniProtKB-SubCell"/>
</dbReference>
<dbReference type="GO" id="GO:0003949">
    <property type="term" value="F:1-(5-phosphoribosyl)-5-[(5-phosphoribosylamino)methylideneamino]imidazole-4-carboxamide isomerase activity"/>
    <property type="evidence" value="ECO:0007669"/>
    <property type="project" value="UniProtKB-UniRule"/>
</dbReference>
<dbReference type="GO" id="GO:0000105">
    <property type="term" value="P:L-histidine biosynthetic process"/>
    <property type="evidence" value="ECO:0007669"/>
    <property type="project" value="UniProtKB-UniRule"/>
</dbReference>
<dbReference type="GO" id="GO:0000162">
    <property type="term" value="P:L-tryptophan biosynthetic process"/>
    <property type="evidence" value="ECO:0007669"/>
    <property type="project" value="TreeGrafter"/>
</dbReference>
<dbReference type="CDD" id="cd04732">
    <property type="entry name" value="HisA"/>
    <property type="match status" value="1"/>
</dbReference>
<dbReference type="FunFam" id="3.20.20.70:FF:000009">
    <property type="entry name" value="1-(5-phosphoribosyl)-5-[(5-phosphoribosylamino)methylideneamino] imidazole-4-carboxamide isomerase"/>
    <property type="match status" value="1"/>
</dbReference>
<dbReference type="Gene3D" id="3.20.20.70">
    <property type="entry name" value="Aldolase class I"/>
    <property type="match status" value="1"/>
</dbReference>
<dbReference type="HAMAP" id="MF_01014">
    <property type="entry name" value="HisA"/>
    <property type="match status" value="1"/>
</dbReference>
<dbReference type="InterPro" id="IPR013785">
    <property type="entry name" value="Aldolase_TIM"/>
</dbReference>
<dbReference type="InterPro" id="IPR006062">
    <property type="entry name" value="His_biosynth"/>
</dbReference>
<dbReference type="InterPro" id="IPR006063">
    <property type="entry name" value="HisA_bact_arch"/>
</dbReference>
<dbReference type="InterPro" id="IPR044524">
    <property type="entry name" value="Isoase_HisA-like"/>
</dbReference>
<dbReference type="InterPro" id="IPR023016">
    <property type="entry name" value="Isoase_HisA-like_bact"/>
</dbReference>
<dbReference type="InterPro" id="IPR011060">
    <property type="entry name" value="RibuloseP-bd_barrel"/>
</dbReference>
<dbReference type="NCBIfam" id="TIGR00007">
    <property type="entry name" value="1-(5-phosphoribosyl)-5-[(5-phosphoribosylamino)methylideneamino]imidazole-4-carboxamide isomerase"/>
    <property type="match status" value="1"/>
</dbReference>
<dbReference type="PANTHER" id="PTHR43090">
    <property type="entry name" value="1-(5-PHOSPHORIBOSYL)-5-[(5-PHOSPHORIBOSYLAMINO)METHYLIDENEAMINO] IMIDAZOLE-4-CARBOXAMIDE ISOMERASE"/>
    <property type="match status" value="1"/>
</dbReference>
<dbReference type="PANTHER" id="PTHR43090:SF2">
    <property type="entry name" value="1-(5-PHOSPHORIBOSYL)-5-[(5-PHOSPHORIBOSYLAMINO)METHYLIDENEAMINO] IMIDAZOLE-4-CARBOXAMIDE ISOMERASE"/>
    <property type="match status" value="1"/>
</dbReference>
<dbReference type="Pfam" id="PF00977">
    <property type="entry name" value="His_biosynth"/>
    <property type="match status" value="1"/>
</dbReference>
<dbReference type="SUPFAM" id="SSF51366">
    <property type="entry name" value="Ribulose-phoshate binding barrel"/>
    <property type="match status" value="1"/>
</dbReference>
<organism>
    <name type="scientific">Pseudomonas aeruginosa (strain UCBPP-PA14)</name>
    <dbReference type="NCBI Taxonomy" id="208963"/>
    <lineage>
        <taxon>Bacteria</taxon>
        <taxon>Pseudomonadati</taxon>
        <taxon>Pseudomonadota</taxon>
        <taxon>Gammaproteobacteria</taxon>
        <taxon>Pseudomonadales</taxon>
        <taxon>Pseudomonadaceae</taxon>
        <taxon>Pseudomonas</taxon>
    </lineage>
</organism>
<comment type="catalytic activity">
    <reaction evidence="1">
        <text>1-(5-phospho-beta-D-ribosyl)-5-[(5-phospho-beta-D-ribosylamino)methylideneamino]imidazole-4-carboxamide = 5-[(5-phospho-1-deoxy-D-ribulos-1-ylimino)methylamino]-1-(5-phospho-beta-D-ribosyl)imidazole-4-carboxamide</text>
        <dbReference type="Rhea" id="RHEA:15469"/>
        <dbReference type="ChEBI" id="CHEBI:58435"/>
        <dbReference type="ChEBI" id="CHEBI:58525"/>
        <dbReference type="EC" id="5.3.1.16"/>
    </reaction>
</comment>
<comment type="pathway">
    <text evidence="1">Amino-acid biosynthesis; L-histidine biosynthesis; L-histidine from 5-phospho-alpha-D-ribose 1-diphosphate: step 4/9.</text>
</comment>
<comment type="subcellular location">
    <subcellularLocation>
        <location evidence="1">Cytoplasm</location>
    </subcellularLocation>
</comment>
<comment type="similarity">
    <text evidence="1">Belongs to the HisA/HisF family.</text>
</comment>
<accession>Q02EM5</accession>
<gene>
    <name evidence="1" type="primary">hisA</name>
    <name type="ordered locus">PA14_67890</name>
</gene>
<keyword id="KW-0028">Amino-acid biosynthesis</keyword>
<keyword id="KW-0963">Cytoplasm</keyword>
<keyword id="KW-0368">Histidine biosynthesis</keyword>
<keyword id="KW-0413">Isomerase</keyword>
<proteinExistence type="inferred from homology"/>
<name>HIS4_PSEAB</name>
<sequence length="245" mass="25938">MLIIPAIDLKDGACVRLRQGLMEDATVFSDDPVAMAAKWVDGGCRRLHLVDLNGAFEGKPVNGEVVTAIARRYPDLPIQIGGGIRSLETIEHYVRAGVSYVIIGTKAVKQPEFVGEACRAFPGKVIVGLDAKDGFVATDGWAEVSEVQVIDLARRFEADGVSAIVYTDISKDGMMQGCNVEATAALANATRIPVIASGGIHNLGDIQKLLDARTPGIIGAITGRAIYEGTLDVAEAQALCDNFKA</sequence>